<accession>Q8RN05</accession>
<comment type="function">
    <text>Involved in the coupling of aromatic side chains of the heptapeptide of vancomycin.</text>
</comment>
<comment type="cofactor">
    <cofactor evidence="1">
        <name>heme</name>
        <dbReference type="ChEBI" id="CHEBI:30413"/>
    </cofactor>
</comment>
<comment type="pathway">
    <text>Antibiotic biosynthesis; vancomycin biosynthesis.</text>
</comment>
<comment type="similarity">
    <text evidence="3">Belongs to the cytochrome P450 family.</text>
</comment>
<name>C5A3_AMYOR</name>
<dbReference type="EC" id="1.14.-.-"/>
<dbReference type="EMBL" id="AF486630">
    <property type="protein sequence ID" value="AAL90877.1"/>
    <property type="molecule type" value="Genomic_DNA"/>
</dbReference>
<dbReference type="SMR" id="Q8RN05"/>
<dbReference type="STRING" id="31958.SD37_33710"/>
<dbReference type="eggNOG" id="COG2124">
    <property type="taxonomic scope" value="Bacteria"/>
</dbReference>
<dbReference type="UniPathway" id="UPA00162"/>
<dbReference type="GO" id="GO:0020037">
    <property type="term" value="F:heme binding"/>
    <property type="evidence" value="ECO:0007669"/>
    <property type="project" value="InterPro"/>
</dbReference>
<dbReference type="GO" id="GO:0005506">
    <property type="term" value="F:iron ion binding"/>
    <property type="evidence" value="ECO:0007669"/>
    <property type="project" value="InterPro"/>
</dbReference>
<dbReference type="GO" id="GO:0004497">
    <property type="term" value="F:monooxygenase activity"/>
    <property type="evidence" value="ECO:0007669"/>
    <property type="project" value="UniProtKB-KW"/>
</dbReference>
<dbReference type="GO" id="GO:0016705">
    <property type="term" value="F:oxidoreductase activity, acting on paired donors, with incorporation or reduction of molecular oxygen"/>
    <property type="evidence" value="ECO:0007669"/>
    <property type="project" value="InterPro"/>
</dbReference>
<dbReference type="GO" id="GO:0033072">
    <property type="term" value="P:vancomycin biosynthetic process"/>
    <property type="evidence" value="ECO:0007669"/>
    <property type="project" value="UniProtKB-UniPathway"/>
</dbReference>
<dbReference type="CDD" id="cd11030">
    <property type="entry name" value="CYP105-like"/>
    <property type="match status" value="1"/>
</dbReference>
<dbReference type="FunFam" id="1.10.630.10:FF:000018">
    <property type="entry name" value="Cytochrome P450 monooxygenase"/>
    <property type="match status" value="1"/>
</dbReference>
<dbReference type="Gene3D" id="1.10.630.10">
    <property type="entry name" value="Cytochrome P450"/>
    <property type="match status" value="1"/>
</dbReference>
<dbReference type="InterPro" id="IPR001128">
    <property type="entry name" value="Cyt_P450"/>
</dbReference>
<dbReference type="InterPro" id="IPR002397">
    <property type="entry name" value="Cyt_P450_B"/>
</dbReference>
<dbReference type="InterPro" id="IPR017972">
    <property type="entry name" value="Cyt_P450_CS"/>
</dbReference>
<dbReference type="InterPro" id="IPR036396">
    <property type="entry name" value="Cyt_P450_sf"/>
</dbReference>
<dbReference type="PANTHER" id="PTHR46696:SF1">
    <property type="entry name" value="CYTOCHROME P450 YJIB-RELATED"/>
    <property type="match status" value="1"/>
</dbReference>
<dbReference type="PANTHER" id="PTHR46696">
    <property type="entry name" value="P450, PUTATIVE (EUROFUNG)-RELATED"/>
    <property type="match status" value="1"/>
</dbReference>
<dbReference type="Pfam" id="PF00067">
    <property type="entry name" value="p450"/>
    <property type="match status" value="1"/>
</dbReference>
<dbReference type="PRINTS" id="PR00359">
    <property type="entry name" value="BP450"/>
</dbReference>
<dbReference type="SUPFAM" id="SSF48264">
    <property type="entry name" value="Cytochrome P450"/>
    <property type="match status" value="1"/>
</dbReference>
<dbReference type="PROSITE" id="PS00086">
    <property type="entry name" value="CYTOCHROME_P450"/>
    <property type="match status" value="1"/>
</dbReference>
<gene>
    <name type="primary">cyp165A3</name>
    <name type="synonym">oxyA</name>
</gene>
<keyword id="KW-0349">Heme</keyword>
<keyword id="KW-0408">Iron</keyword>
<keyword id="KW-0479">Metal-binding</keyword>
<keyword id="KW-0503">Monooxygenase</keyword>
<keyword id="KW-0560">Oxidoreductase</keyword>
<reference evidence="3" key="1">
    <citation type="journal article" date="2002" name="J. Biol. Chem.">
        <title>Crystal structure of OxyB, a cytochrome P450 implicated in an oxidative phenol coupling reaction during vancomycin biosynthesis.</title>
        <authorList>
            <person name="Zerbe K."/>
            <person name="Pylypenko O."/>
            <person name="Vitali F."/>
            <person name="Zhang W."/>
            <person name="Rousett S."/>
            <person name="Heck M."/>
            <person name="Vrijbloed J.W."/>
            <person name="Bischoff D."/>
            <person name="Bister B."/>
            <person name="Suessmuth R.D."/>
            <person name="Pelzer S."/>
            <person name="Wohlleben W."/>
            <person name="Robinson J.A."/>
            <person name="Schlichting I."/>
        </authorList>
    </citation>
    <scope>NUCLEOTIDE SEQUENCE [GENOMIC DNA]</scope>
</reference>
<evidence type="ECO:0000250" key="1"/>
<evidence type="ECO:0000256" key="2">
    <source>
        <dbReference type="SAM" id="MobiDB-lite"/>
    </source>
</evidence>
<evidence type="ECO:0000305" key="3"/>
<evidence type="ECO:0000312" key="4">
    <source>
        <dbReference type="EMBL" id="AAL90877.1"/>
    </source>
</evidence>
<sequence length="391" mass="43829">MFEEKNALRGTEIHRRERFDPGPELRALMAEGRMSVMESEESPGGRTGWLATGYEETRQVLGSDKFSAKLLFGGTAAGRIWPGFLNQYDPPEHTRLRRMVASAFTVRRMRDFRPRIEAVVKATLDDIEATGGPVDFVPRFAWPIATTVICDFLGIPRDDQAELSRVLHASRSERSGKRRVAAGNKYWTYMGQVAAKTRRDPGDDMFGAVVREHGDDITDAELLGVAAFVMGASGDQVARFLSAGAWLMVEHPEQFAVLRDDPDSVPDWLNEVARYLTSDEKTTPRIALEDVRIGDQLVKKGDAVTCSLLASNRHRFPDPEDRFDITREKPSHVTFGHGIHHCLGRPLAEMVFRTAIPALAHRFPTLRLAEPDREIKLGPPPFDVEALLLDW</sequence>
<organism evidence="4">
    <name type="scientific">Amycolatopsis orientalis</name>
    <name type="common">Nocardia orientalis</name>
    <dbReference type="NCBI Taxonomy" id="31958"/>
    <lineage>
        <taxon>Bacteria</taxon>
        <taxon>Bacillati</taxon>
        <taxon>Actinomycetota</taxon>
        <taxon>Actinomycetes</taxon>
        <taxon>Pseudonocardiales</taxon>
        <taxon>Pseudonocardiaceae</taxon>
        <taxon>Amycolatopsis</taxon>
    </lineage>
</organism>
<feature type="chain" id="PRO_0000052238" description="Cytochrome P450 165A3">
    <location>
        <begin position="1"/>
        <end position="391"/>
    </location>
</feature>
<feature type="region of interest" description="Disordered" evidence="2">
    <location>
        <begin position="1"/>
        <end position="22"/>
    </location>
</feature>
<feature type="binding site" description="axial binding residue" evidence="1">
    <location>
        <position position="342"/>
    </location>
    <ligand>
        <name>heme</name>
        <dbReference type="ChEBI" id="CHEBI:30413"/>
    </ligand>
    <ligandPart>
        <name>Fe</name>
        <dbReference type="ChEBI" id="CHEBI:18248"/>
    </ligandPart>
</feature>
<protein>
    <recommendedName>
        <fullName>Cytochrome P450 165A3</fullName>
        <ecNumber>1.14.-.-</ecNumber>
    </recommendedName>
    <alternativeName>
        <fullName>Vancomycin biosynthesis protein OxyA</fullName>
    </alternativeName>
</protein>
<proteinExistence type="inferred from homology"/>